<sequence>MNEFWLQINIIVPAAGIDLVCHEMTELGSAGITVEERALDTFVVPDPDADIPETLILKVYFPPEIEPEQLARQVAERLAWLAPLIPGLEVVTPEISRVRAEDWAENWKQHFGIQRIGSRLVIRPTWEAFSPDPQDAVLTLDPGMAFGTGSHATTRLCLEALAELYETPPGPQRVLDVGTGSGILAVAAALLGAGQVLGCDIDETACQVALDNARQNGVIEQIAVTLDPLETLGGDFDVVLANILAEENARLAPELVHRLAPGGVLILSGILNEKEQLVIDAFAGRGLTGPDIRRQDEWSCLCYIKEA</sequence>
<gene>
    <name evidence="1" type="primary">prmA</name>
    <name type="ordered locus">Pcar_3080</name>
</gene>
<feature type="chain" id="PRO_1000046054" description="Ribosomal protein L11 methyltransferase">
    <location>
        <begin position="1"/>
        <end position="307"/>
    </location>
</feature>
<feature type="binding site" evidence="1">
    <location>
        <position position="154"/>
    </location>
    <ligand>
        <name>S-adenosyl-L-methionine</name>
        <dbReference type="ChEBI" id="CHEBI:59789"/>
    </ligand>
</feature>
<feature type="binding site" evidence="1">
    <location>
        <position position="178"/>
    </location>
    <ligand>
        <name>S-adenosyl-L-methionine</name>
        <dbReference type="ChEBI" id="CHEBI:59789"/>
    </ligand>
</feature>
<feature type="binding site" evidence="1">
    <location>
        <position position="200"/>
    </location>
    <ligand>
        <name>S-adenosyl-L-methionine</name>
        <dbReference type="ChEBI" id="CHEBI:59789"/>
    </ligand>
</feature>
<feature type="binding site" evidence="1">
    <location>
        <position position="242"/>
    </location>
    <ligand>
        <name>S-adenosyl-L-methionine</name>
        <dbReference type="ChEBI" id="CHEBI:59789"/>
    </ligand>
</feature>
<name>PRMA_SYNC1</name>
<organism>
    <name type="scientific">Syntrophotalea carbinolica (strain DSM 2380 / NBRC 103641 / GraBd1)</name>
    <name type="common">Pelobacter carbinolicus</name>
    <dbReference type="NCBI Taxonomy" id="338963"/>
    <lineage>
        <taxon>Bacteria</taxon>
        <taxon>Pseudomonadati</taxon>
        <taxon>Thermodesulfobacteriota</taxon>
        <taxon>Desulfuromonadia</taxon>
        <taxon>Desulfuromonadales</taxon>
        <taxon>Syntrophotaleaceae</taxon>
        <taxon>Syntrophotalea</taxon>
    </lineage>
</organism>
<accession>Q39ZZ2</accession>
<comment type="function">
    <text evidence="1">Methylates ribosomal protein L11.</text>
</comment>
<comment type="catalytic activity">
    <reaction evidence="1">
        <text>L-lysyl-[protein] + 3 S-adenosyl-L-methionine = N(6),N(6),N(6)-trimethyl-L-lysyl-[protein] + 3 S-adenosyl-L-homocysteine + 3 H(+)</text>
        <dbReference type="Rhea" id="RHEA:54192"/>
        <dbReference type="Rhea" id="RHEA-COMP:9752"/>
        <dbReference type="Rhea" id="RHEA-COMP:13826"/>
        <dbReference type="ChEBI" id="CHEBI:15378"/>
        <dbReference type="ChEBI" id="CHEBI:29969"/>
        <dbReference type="ChEBI" id="CHEBI:57856"/>
        <dbReference type="ChEBI" id="CHEBI:59789"/>
        <dbReference type="ChEBI" id="CHEBI:61961"/>
    </reaction>
</comment>
<comment type="subcellular location">
    <subcellularLocation>
        <location evidence="1">Cytoplasm</location>
    </subcellularLocation>
</comment>
<comment type="similarity">
    <text evidence="1">Belongs to the methyltransferase superfamily. PrmA family.</text>
</comment>
<reference key="1">
    <citation type="submission" date="2005-10" db="EMBL/GenBank/DDBJ databases">
        <title>Complete sequence of Pelobacter carbinolicus DSM 2380.</title>
        <authorList>
            <person name="Copeland A."/>
            <person name="Lucas S."/>
            <person name="Lapidus A."/>
            <person name="Barry K."/>
            <person name="Detter J.C."/>
            <person name="Glavina T."/>
            <person name="Hammon N."/>
            <person name="Israni S."/>
            <person name="Pitluck S."/>
            <person name="Chertkov O."/>
            <person name="Schmutz J."/>
            <person name="Larimer F."/>
            <person name="Land M."/>
            <person name="Kyrpides N."/>
            <person name="Ivanova N."/>
            <person name="Richardson P."/>
        </authorList>
    </citation>
    <scope>NUCLEOTIDE SEQUENCE [LARGE SCALE GENOMIC DNA]</scope>
    <source>
        <strain>DSM 2380 / NBRC 103641 / GraBd1</strain>
    </source>
</reference>
<evidence type="ECO:0000255" key="1">
    <source>
        <dbReference type="HAMAP-Rule" id="MF_00735"/>
    </source>
</evidence>
<proteinExistence type="inferred from homology"/>
<protein>
    <recommendedName>
        <fullName evidence="1">Ribosomal protein L11 methyltransferase</fullName>
        <shortName evidence="1">L11 Mtase</shortName>
        <ecNumber evidence="1">2.1.1.-</ecNumber>
    </recommendedName>
</protein>
<keyword id="KW-0963">Cytoplasm</keyword>
<keyword id="KW-0489">Methyltransferase</keyword>
<keyword id="KW-1185">Reference proteome</keyword>
<keyword id="KW-0949">S-adenosyl-L-methionine</keyword>
<keyword id="KW-0808">Transferase</keyword>
<dbReference type="EC" id="2.1.1.-" evidence="1"/>
<dbReference type="EMBL" id="CP000142">
    <property type="protein sequence ID" value="ABA90315.1"/>
    <property type="molecule type" value="Genomic_DNA"/>
</dbReference>
<dbReference type="RefSeq" id="WP_011342875.1">
    <property type="nucleotide sequence ID" value="NC_007498.2"/>
</dbReference>
<dbReference type="SMR" id="Q39ZZ2"/>
<dbReference type="STRING" id="338963.Pcar_3080"/>
<dbReference type="KEGG" id="pca:Pcar_3080"/>
<dbReference type="eggNOG" id="COG2264">
    <property type="taxonomic scope" value="Bacteria"/>
</dbReference>
<dbReference type="HOGENOM" id="CLU_049382_0_1_7"/>
<dbReference type="OrthoDB" id="9785995at2"/>
<dbReference type="Proteomes" id="UP000002534">
    <property type="component" value="Chromosome"/>
</dbReference>
<dbReference type="GO" id="GO:0005737">
    <property type="term" value="C:cytoplasm"/>
    <property type="evidence" value="ECO:0007669"/>
    <property type="project" value="UniProtKB-SubCell"/>
</dbReference>
<dbReference type="GO" id="GO:0016279">
    <property type="term" value="F:protein-lysine N-methyltransferase activity"/>
    <property type="evidence" value="ECO:0007669"/>
    <property type="project" value="RHEA"/>
</dbReference>
<dbReference type="GO" id="GO:0032259">
    <property type="term" value="P:methylation"/>
    <property type="evidence" value="ECO:0007669"/>
    <property type="project" value="UniProtKB-KW"/>
</dbReference>
<dbReference type="CDD" id="cd02440">
    <property type="entry name" value="AdoMet_MTases"/>
    <property type="match status" value="1"/>
</dbReference>
<dbReference type="Gene3D" id="3.40.50.150">
    <property type="entry name" value="Vaccinia Virus protein VP39"/>
    <property type="match status" value="1"/>
</dbReference>
<dbReference type="HAMAP" id="MF_00735">
    <property type="entry name" value="Methyltr_PrmA"/>
    <property type="match status" value="1"/>
</dbReference>
<dbReference type="InterPro" id="IPR050078">
    <property type="entry name" value="Ribosomal_L11_MeTrfase_PrmA"/>
</dbReference>
<dbReference type="InterPro" id="IPR004498">
    <property type="entry name" value="Ribosomal_PrmA_MeTrfase"/>
</dbReference>
<dbReference type="InterPro" id="IPR029063">
    <property type="entry name" value="SAM-dependent_MTases_sf"/>
</dbReference>
<dbReference type="NCBIfam" id="TIGR00406">
    <property type="entry name" value="prmA"/>
    <property type="match status" value="1"/>
</dbReference>
<dbReference type="PANTHER" id="PTHR43648">
    <property type="entry name" value="ELECTRON TRANSFER FLAVOPROTEIN BETA SUBUNIT LYSINE METHYLTRANSFERASE"/>
    <property type="match status" value="1"/>
</dbReference>
<dbReference type="PANTHER" id="PTHR43648:SF1">
    <property type="entry name" value="ELECTRON TRANSFER FLAVOPROTEIN BETA SUBUNIT LYSINE METHYLTRANSFERASE"/>
    <property type="match status" value="1"/>
</dbReference>
<dbReference type="Pfam" id="PF06325">
    <property type="entry name" value="PrmA"/>
    <property type="match status" value="1"/>
</dbReference>
<dbReference type="PIRSF" id="PIRSF000401">
    <property type="entry name" value="RPL11_MTase"/>
    <property type="match status" value="1"/>
</dbReference>
<dbReference type="SUPFAM" id="SSF53335">
    <property type="entry name" value="S-adenosyl-L-methionine-dependent methyltransferases"/>
    <property type="match status" value="1"/>
</dbReference>